<gene>
    <name evidence="1" type="primary">murD</name>
    <name type="ordered locus">Rfer_3427</name>
</gene>
<evidence type="ECO:0000255" key="1">
    <source>
        <dbReference type="HAMAP-Rule" id="MF_00639"/>
    </source>
</evidence>
<protein>
    <recommendedName>
        <fullName evidence="1">UDP-N-acetylmuramoylalanine--D-glutamate ligase</fullName>
        <ecNumber evidence="1">6.3.2.9</ecNumber>
    </recommendedName>
    <alternativeName>
        <fullName evidence="1">D-glutamic acid-adding enzyme</fullName>
    </alternativeName>
    <alternativeName>
        <fullName evidence="1">UDP-N-acetylmuramoyl-L-alanyl-D-glutamate synthetase</fullName>
    </alternativeName>
</protein>
<comment type="function">
    <text evidence="1">Cell wall formation. Catalyzes the addition of glutamate to the nucleotide precursor UDP-N-acetylmuramoyl-L-alanine (UMA).</text>
</comment>
<comment type="catalytic activity">
    <reaction evidence="1">
        <text>UDP-N-acetyl-alpha-D-muramoyl-L-alanine + D-glutamate + ATP = UDP-N-acetyl-alpha-D-muramoyl-L-alanyl-D-glutamate + ADP + phosphate + H(+)</text>
        <dbReference type="Rhea" id="RHEA:16429"/>
        <dbReference type="ChEBI" id="CHEBI:15378"/>
        <dbReference type="ChEBI" id="CHEBI:29986"/>
        <dbReference type="ChEBI" id="CHEBI:30616"/>
        <dbReference type="ChEBI" id="CHEBI:43474"/>
        <dbReference type="ChEBI" id="CHEBI:83898"/>
        <dbReference type="ChEBI" id="CHEBI:83900"/>
        <dbReference type="ChEBI" id="CHEBI:456216"/>
        <dbReference type="EC" id="6.3.2.9"/>
    </reaction>
</comment>
<comment type="pathway">
    <text evidence="1">Cell wall biogenesis; peptidoglycan biosynthesis.</text>
</comment>
<comment type="subcellular location">
    <subcellularLocation>
        <location evidence="1">Cytoplasm</location>
    </subcellularLocation>
</comment>
<comment type="similarity">
    <text evidence="1">Belongs to the MurCDEF family.</text>
</comment>
<reference key="1">
    <citation type="submission" date="2006-02" db="EMBL/GenBank/DDBJ databases">
        <title>Complete sequence of chromosome of Rhodoferax ferrireducens DSM 15236.</title>
        <authorList>
            <person name="Copeland A."/>
            <person name="Lucas S."/>
            <person name="Lapidus A."/>
            <person name="Barry K."/>
            <person name="Detter J.C."/>
            <person name="Glavina del Rio T."/>
            <person name="Hammon N."/>
            <person name="Israni S."/>
            <person name="Pitluck S."/>
            <person name="Brettin T."/>
            <person name="Bruce D."/>
            <person name="Han C."/>
            <person name="Tapia R."/>
            <person name="Gilna P."/>
            <person name="Kiss H."/>
            <person name="Schmutz J."/>
            <person name="Larimer F."/>
            <person name="Land M."/>
            <person name="Kyrpides N."/>
            <person name="Ivanova N."/>
            <person name="Richardson P."/>
        </authorList>
    </citation>
    <scope>NUCLEOTIDE SEQUENCE [LARGE SCALE GENOMIC DNA]</scope>
    <source>
        <strain>ATCC BAA-621 / DSM 15236 / T118</strain>
    </source>
</reference>
<accession>Q21SW7</accession>
<keyword id="KW-0067">ATP-binding</keyword>
<keyword id="KW-0131">Cell cycle</keyword>
<keyword id="KW-0132">Cell division</keyword>
<keyword id="KW-0133">Cell shape</keyword>
<keyword id="KW-0961">Cell wall biogenesis/degradation</keyword>
<keyword id="KW-0963">Cytoplasm</keyword>
<keyword id="KW-0436">Ligase</keyword>
<keyword id="KW-0547">Nucleotide-binding</keyword>
<keyword id="KW-0573">Peptidoglycan synthesis</keyword>
<keyword id="KW-1185">Reference proteome</keyword>
<sequence>MNALQDQHVLILGLGASGLAMARWCARCGARVTVADTRSAPPQLAALQRELPAAQFISGAFDAALVVGTDVRAVFKSPGLSPLDVATVIEAANTIGIRATGELGLFSQALADLKATQNYTPKVLAVTGTNGKTTVTALTGLLVERGGKSVAVAGNIGPTLLDTLIQHLAAGTLPEVWVIELSSFQLEGETGFEPSAAAVLNITQDHLDWHGSMAAYVAAKAHVFGATGLMILNREDPQVMAMLPEPVRVKLQRPQLRAHVTFGADLPRRPGDFGLEQVNGMLWLVRALEADETLKNRKGETPELFLQRLMPADALRIRGRHNAVNALAALALAQAAGCALGPMLYGLRDYRGEPHRVAPIGIFNEVEFFDDSKGTNVGATVAALAGLGSERKVIVILGGEGKGQDFAPLVDPVSRYARAVVLIGRDAPLLRAALQATHVPLLEAESMAQAVALANAQAHAGDAVLLSPACASFDMFDNYEHRAQVFAQAVGELASAAGAAWEGAAP</sequence>
<dbReference type="EC" id="6.3.2.9" evidence="1"/>
<dbReference type="EMBL" id="CP000267">
    <property type="protein sequence ID" value="ABD71136.1"/>
    <property type="molecule type" value="Genomic_DNA"/>
</dbReference>
<dbReference type="RefSeq" id="WP_011465699.1">
    <property type="nucleotide sequence ID" value="NC_007908.1"/>
</dbReference>
<dbReference type="SMR" id="Q21SW7"/>
<dbReference type="STRING" id="338969.Rfer_3427"/>
<dbReference type="KEGG" id="rfr:Rfer_3427"/>
<dbReference type="eggNOG" id="COG0771">
    <property type="taxonomic scope" value="Bacteria"/>
</dbReference>
<dbReference type="HOGENOM" id="CLU_032540_1_1_4"/>
<dbReference type="OrthoDB" id="9809796at2"/>
<dbReference type="UniPathway" id="UPA00219"/>
<dbReference type="Proteomes" id="UP000008332">
    <property type="component" value="Chromosome"/>
</dbReference>
<dbReference type="GO" id="GO:0005737">
    <property type="term" value="C:cytoplasm"/>
    <property type="evidence" value="ECO:0007669"/>
    <property type="project" value="UniProtKB-SubCell"/>
</dbReference>
<dbReference type="GO" id="GO:0005524">
    <property type="term" value="F:ATP binding"/>
    <property type="evidence" value="ECO:0007669"/>
    <property type="project" value="UniProtKB-UniRule"/>
</dbReference>
<dbReference type="GO" id="GO:0004326">
    <property type="term" value="F:tetrahydrofolylpolyglutamate synthase activity"/>
    <property type="evidence" value="ECO:0007669"/>
    <property type="project" value="InterPro"/>
</dbReference>
<dbReference type="GO" id="GO:0008764">
    <property type="term" value="F:UDP-N-acetylmuramoylalanine-D-glutamate ligase activity"/>
    <property type="evidence" value="ECO:0007669"/>
    <property type="project" value="UniProtKB-UniRule"/>
</dbReference>
<dbReference type="GO" id="GO:0051301">
    <property type="term" value="P:cell division"/>
    <property type="evidence" value="ECO:0007669"/>
    <property type="project" value="UniProtKB-KW"/>
</dbReference>
<dbReference type="GO" id="GO:0071555">
    <property type="term" value="P:cell wall organization"/>
    <property type="evidence" value="ECO:0007669"/>
    <property type="project" value="UniProtKB-KW"/>
</dbReference>
<dbReference type="GO" id="GO:0009252">
    <property type="term" value="P:peptidoglycan biosynthetic process"/>
    <property type="evidence" value="ECO:0007669"/>
    <property type="project" value="UniProtKB-UniRule"/>
</dbReference>
<dbReference type="GO" id="GO:0008360">
    <property type="term" value="P:regulation of cell shape"/>
    <property type="evidence" value="ECO:0007669"/>
    <property type="project" value="UniProtKB-KW"/>
</dbReference>
<dbReference type="Gene3D" id="3.90.190.20">
    <property type="entry name" value="Mur ligase, C-terminal domain"/>
    <property type="match status" value="1"/>
</dbReference>
<dbReference type="Gene3D" id="3.40.1190.10">
    <property type="entry name" value="Mur-like, catalytic domain"/>
    <property type="match status" value="1"/>
</dbReference>
<dbReference type="Gene3D" id="3.40.50.720">
    <property type="entry name" value="NAD(P)-binding Rossmann-like Domain"/>
    <property type="match status" value="1"/>
</dbReference>
<dbReference type="HAMAP" id="MF_00639">
    <property type="entry name" value="MurD"/>
    <property type="match status" value="1"/>
</dbReference>
<dbReference type="InterPro" id="IPR018109">
    <property type="entry name" value="Folylpolyglutamate_synth_CS"/>
</dbReference>
<dbReference type="InterPro" id="IPR036565">
    <property type="entry name" value="Mur-like_cat_sf"/>
</dbReference>
<dbReference type="InterPro" id="IPR004101">
    <property type="entry name" value="Mur_ligase_C"/>
</dbReference>
<dbReference type="InterPro" id="IPR036615">
    <property type="entry name" value="Mur_ligase_C_dom_sf"/>
</dbReference>
<dbReference type="InterPro" id="IPR013221">
    <property type="entry name" value="Mur_ligase_cen"/>
</dbReference>
<dbReference type="InterPro" id="IPR005762">
    <property type="entry name" value="MurD"/>
</dbReference>
<dbReference type="NCBIfam" id="TIGR01087">
    <property type="entry name" value="murD"/>
    <property type="match status" value="1"/>
</dbReference>
<dbReference type="PANTHER" id="PTHR43692">
    <property type="entry name" value="UDP-N-ACETYLMURAMOYLALANINE--D-GLUTAMATE LIGASE"/>
    <property type="match status" value="1"/>
</dbReference>
<dbReference type="PANTHER" id="PTHR43692:SF1">
    <property type="entry name" value="UDP-N-ACETYLMURAMOYLALANINE--D-GLUTAMATE LIGASE"/>
    <property type="match status" value="1"/>
</dbReference>
<dbReference type="Pfam" id="PF02875">
    <property type="entry name" value="Mur_ligase_C"/>
    <property type="match status" value="1"/>
</dbReference>
<dbReference type="Pfam" id="PF08245">
    <property type="entry name" value="Mur_ligase_M"/>
    <property type="match status" value="1"/>
</dbReference>
<dbReference type="Pfam" id="PF21799">
    <property type="entry name" value="MurD-like_N"/>
    <property type="match status" value="1"/>
</dbReference>
<dbReference type="SUPFAM" id="SSF51984">
    <property type="entry name" value="MurCD N-terminal domain"/>
    <property type="match status" value="1"/>
</dbReference>
<dbReference type="SUPFAM" id="SSF53623">
    <property type="entry name" value="MurD-like peptide ligases, catalytic domain"/>
    <property type="match status" value="1"/>
</dbReference>
<dbReference type="SUPFAM" id="SSF53244">
    <property type="entry name" value="MurD-like peptide ligases, peptide-binding domain"/>
    <property type="match status" value="1"/>
</dbReference>
<proteinExistence type="inferred from homology"/>
<feature type="chain" id="PRO_0000257227" description="UDP-N-acetylmuramoylalanine--D-glutamate ligase">
    <location>
        <begin position="1"/>
        <end position="506"/>
    </location>
</feature>
<feature type="binding site" evidence="1">
    <location>
        <begin position="128"/>
        <end position="134"/>
    </location>
    <ligand>
        <name>ATP</name>
        <dbReference type="ChEBI" id="CHEBI:30616"/>
    </ligand>
</feature>
<organism>
    <name type="scientific">Albidiferax ferrireducens (strain ATCC BAA-621 / DSM 15236 / T118)</name>
    <name type="common">Rhodoferax ferrireducens</name>
    <dbReference type="NCBI Taxonomy" id="338969"/>
    <lineage>
        <taxon>Bacteria</taxon>
        <taxon>Pseudomonadati</taxon>
        <taxon>Pseudomonadota</taxon>
        <taxon>Betaproteobacteria</taxon>
        <taxon>Burkholderiales</taxon>
        <taxon>Comamonadaceae</taxon>
        <taxon>Rhodoferax</taxon>
    </lineage>
</organism>
<name>MURD_ALBFT</name>